<organism>
    <name type="scientific">Cytophaga hutchinsonii (strain ATCC 33406 / DSM 1761 / CIP 103989 / NBRC 15051 / NCIMB 9469 / D465)</name>
    <dbReference type="NCBI Taxonomy" id="269798"/>
    <lineage>
        <taxon>Bacteria</taxon>
        <taxon>Pseudomonadati</taxon>
        <taxon>Bacteroidota</taxon>
        <taxon>Cytophagia</taxon>
        <taxon>Cytophagales</taxon>
        <taxon>Cytophagaceae</taxon>
        <taxon>Cytophaga</taxon>
    </lineage>
</organism>
<protein>
    <recommendedName>
        <fullName evidence="1">Small ribosomal subunit biogenesis GTPase RsgA</fullName>
        <ecNumber evidence="1">3.6.1.-</ecNumber>
    </recommendedName>
</protein>
<feature type="chain" id="PRO_1000188059" description="Small ribosomal subunit biogenesis GTPase RsgA">
    <location>
        <begin position="1"/>
        <end position="307"/>
    </location>
</feature>
<feature type="domain" description="CP-type G" evidence="2">
    <location>
        <begin position="78"/>
        <end position="240"/>
    </location>
</feature>
<feature type="binding site" evidence="1">
    <location>
        <begin position="128"/>
        <end position="131"/>
    </location>
    <ligand>
        <name>GTP</name>
        <dbReference type="ChEBI" id="CHEBI:37565"/>
    </ligand>
</feature>
<feature type="binding site" evidence="1">
    <location>
        <begin position="182"/>
        <end position="190"/>
    </location>
    <ligand>
        <name>GTP</name>
        <dbReference type="ChEBI" id="CHEBI:37565"/>
    </ligand>
</feature>
<feature type="binding site" evidence="1">
    <location>
        <position position="264"/>
    </location>
    <ligand>
        <name>Zn(2+)</name>
        <dbReference type="ChEBI" id="CHEBI:29105"/>
    </ligand>
</feature>
<feature type="binding site" evidence="1">
    <location>
        <position position="269"/>
    </location>
    <ligand>
        <name>Zn(2+)</name>
        <dbReference type="ChEBI" id="CHEBI:29105"/>
    </ligand>
</feature>
<feature type="binding site" evidence="1">
    <location>
        <position position="271"/>
    </location>
    <ligand>
        <name>Zn(2+)</name>
        <dbReference type="ChEBI" id="CHEBI:29105"/>
    </ligand>
</feature>
<feature type="binding site" evidence="1">
    <location>
        <position position="277"/>
    </location>
    <ligand>
        <name>Zn(2+)</name>
        <dbReference type="ChEBI" id="CHEBI:29105"/>
    </ligand>
</feature>
<proteinExistence type="inferred from homology"/>
<keyword id="KW-0963">Cytoplasm</keyword>
<keyword id="KW-0342">GTP-binding</keyword>
<keyword id="KW-0378">Hydrolase</keyword>
<keyword id="KW-0479">Metal-binding</keyword>
<keyword id="KW-0547">Nucleotide-binding</keyword>
<keyword id="KW-1185">Reference proteome</keyword>
<keyword id="KW-0690">Ribosome biogenesis</keyword>
<keyword id="KW-0694">RNA-binding</keyword>
<keyword id="KW-0699">rRNA-binding</keyword>
<keyword id="KW-0862">Zinc</keyword>
<gene>
    <name evidence="1" type="primary">rsgA</name>
    <name type="ordered locus">CHU_2727</name>
</gene>
<sequence>MKGIIYKSTGSWYLVKAEDGTYYNARLRGKFKHLDLKVTNPLSVGDFVDMNIDPLTPTEAMIFNIEPRTNYIIRRSSHKTAFGHLIACNIDQSILLVTLKQPKTSIGFIDRFLISCEAFRIPAVIVFNKSDLYNEALMEEYLYLKDVYEPLGYRCILTSMEKENGLDELMPLLQNKISVVSGHSGVGKSTLINKIFPQLDIKTDIISDHSQKGKHTTTFAEMYDLNETSKVIDTPGIKELGLFEIENDVLSHYFPEMRSLMGQCRFHNCKHTNEPGCRVKEYVEAFKIAPTRYESYCSIIFEKDTHR</sequence>
<evidence type="ECO:0000255" key="1">
    <source>
        <dbReference type="HAMAP-Rule" id="MF_01820"/>
    </source>
</evidence>
<evidence type="ECO:0000255" key="2">
    <source>
        <dbReference type="PROSITE-ProRule" id="PRU01058"/>
    </source>
</evidence>
<accession>Q11RI7</accession>
<dbReference type="EC" id="3.6.1.-" evidence="1"/>
<dbReference type="EMBL" id="CP000383">
    <property type="protein sequence ID" value="ABG59977.1"/>
    <property type="molecule type" value="Genomic_DNA"/>
</dbReference>
<dbReference type="RefSeq" id="WP_011586087.1">
    <property type="nucleotide sequence ID" value="NC_008255.1"/>
</dbReference>
<dbReference type="SMR" id="Q11RI7"/>
<dbReference type="STRING" id="269798.CHU_2727"/>
<dbReference type="KEGG" id="chu:CHU_2727"/>
<dbReference type="eggNOG" id="COG1162">
    <property type="taxonomic scope" value="Bacteria"/>
</dbReference>
<dbReference type="HOGENOM" id="CLU_033617_2_0_10"/>
<dbReference type="OrthoDB" id="9809485at2"/>
<dbReference type="Proteomes" id="UP000001822">
    <property type="component" value="Chromosome"/>
</dbReference>
<dbReference type="GO" id="GO:0005737">
    <property type="term" value="C:cytoplasm"/>
    <property type="evidence" value="ECO:0007669"/>
    <property type="project" value="UniProtKB-SubCell"/>
</dbReference>
<dbReference type="GO" id="GO:0005525">
    <property type="term" value="F:GTP binding"/>
    <property type="evidence" value="ECO:0007669"/>
    <property type="project" value="UniProtKB-UniRule"/>
</dbReference>
<dbReference type="GO" id="GO:0003924">
    <property type="term" value="F:GTPase activity"/>
    <property type="evidence" value="ECO:0007669"/>
    <property type="project" value="UniProtKB-UniRule"/>
</dbReference>
<dbReference type="GO" id="GO:0046872">
    <property type="term" value="F:metal ion binding"/>
    <property type="evidence" value="ECO:0007669"/>
    <property type="project" value="UniProtKB-KW"/>
</dbReference>
<dbReference type="GO" id="GO:0019843">
    <property type="term" value="F:rRNA binding"/>
    <property type="evidence" value="ECO:0007669"/>
    <property type="project" value="UniProtKB-KW"/>
</dbReference>
<dbReference type="GO" id="GO:0042274">
    <property type="term" value="P:ribosomal small subunit biogenesis"/>
    <property type="evidence" value="ECO:0007669"/>
    <property type="project" value="UniProtKB-UniRule"/>
</dbReference>
<dbReference type="CDD" id="cd04466">
    <property type="entry name" value="S1_YloQ_GTPase"/>
    <property type="match status" value="1"/>
</dbReference>
<dbReference type="CDD" id="cd01854">
    <property type="entry name" value="YjeQ_EngC"/>
    <property type="match status" value="1"/>
</dbReference>
<dbReference type="Gene3D" id="2.40.50.140">
    <property type="entry name" value="Nucleic acid-binding proteins"/>
    <property type="match status" value="1"/>
</dbReference>
<dbReference type="Gene3D" id="3.40.50.300">
    <property type="entry name" value="P-loop containing nucleotide triphosphate hydrolases"/>
    <property type="match status" value="1"/>
</dbReference>
<dbReference type="Gene3D" id="1.10.40.50">
    <property type="entry name" value="Probable gtpase engc, domain 3"/>
    <property type="match status" value="1"/>
</dbReference>
<dbReference type="HAMAP" id="MF_01820">
    <property type="entry name" value="GTPase_RsgA"/>
    <property type="match status" value="1"/>
</dbReference>
<dbReference type="InterPro" id="IPR030378">
    <property type="entry name" value="G_CP_dom"/>
</dbReference>
<dbReference type="InterPro" id="IPR012340">
    <property type="entry name" value="NA-bd_OB-fold"/>
</dbReference>
<dbReference type="InterPro" id="IPR027417">
    <property type="entry name" value="P-loop_NTPase"/>
</dbReference>
<dbReference type="InterPro" id="IPR004881">
    <property type="entry name" value="Ribosome_biogen_GTPase_RsgA"/>
</dbReference>
<dbReference type="InterPro" id="IPR010914">
    <property type="entry name" value="RsgA_GTPase_dom"/>
</dbReference>
<dbReference type="InterPro" id="IPR031944">
    <property type="entry name" value="RsgA_N"/>
</dbReference>
<dbReference type="NCBIfam" id="TIGR00157">
    <property type="entry name" value="ribosome small subunit-dependent GTPase A"/>
    <property type="match status" value="1"/>
</dbReference>
<dbReference type="PANTHER" id="PTHR32120">
    <property type="entry name" value="SMALL RIBOSOMAL SUBUNIT BIOGENESIS GTPASE RSGA"/>
    <property type="match status" value="1"/>
</dbReference>
<dbReference type="PANTHER" id="PTHR32120:SF11">
    <property type="entry name" value="SMALL RIBOSOMAL SUBUNIT BIOGENESIS GTPASE RSGA 1, MITOCHONDRIAL-RELATED"/>
    <property type="match status" value="1"/>
</dbReference>
<dbReference type="Pfam" id="PF03193">
    <property type="entry name" value="RsgA_GTPase"/>
    <property type="match status" value="1"/>
</dbReference>
<dbReference type="Pfam" id="PF16745">
    <property type="entry name" value="RsgA_N"/>
    <property type="match status" value="1"/>
</dbReference>
<dbReference type="SUPFAM" id="SSF50249">
    <property type="entry name" value="Nucleic acid-binding proteins"/>
    <property type="match status" value="1"/>
</dbReference>
<dbReference type="SUPFAM" id="SSF52540">
    <property type="entry name" value="P-loop containing nucleoside triphosphate hydrolases"/>
    <property type="match status" value="1"/>
</dbReference>
<dbReference type="PROSITE" id="PS50936">
    <property type="entry name" value="ENGC_GTPASE"/>
    <property type="match status" value="1"/>
</dbReference>
<dbReference type="PROSITE" id="PS51721">
    <property type="entry name" value="G_CP"/>
    <property type="match status" value="1"/>
</dbReference>
<comment type="function">
    <text evidence="1">One of several proteins that assist in the late maturation steps of the functional core of the 30S ribosomal subunit. Helps release RbfA from mature subunits. May play a role in the assembly of ribosomal proteins into the subunit. Circularly permuted GTPase that catalyzes slow GTP hydrolysis, GTPase activity is stimulated by the 30S ribosomal subunit.</text>
</comment>
<comment type="cofactor">
    <cofactor evidence="1">
        <name>Zn(2+)</name>
        <dbReference type="ChEBI" id="CHEBI:29105"/>
    </cofactor>
    <text evidence="1">Binds 1 zinc ion per subunit.</text>
</comment>
<comment type="subunit">
    <text evidence="1">Monomer. Associates with 30S ribosomal subunit, binds 16S rRNA.</text>
</comment>
<comment type="subcellular location">
    <subcellularLocation>
        <location evidence="1">Cytoplasm</location>
    </subcellularLocation>
</comment>
<comment type="similarity">
    <text evidence="1">Belongs to the TRAFAC class YlqF/YawG GTPase family. RsgA subfamily.</text>
</comment>
<reference key="1">
    <citation type="journal article" date="2007" name="Appl. Environ. Microbiol.">
        <title>Genome sequence of the cellulolytic gliding bacterium Cytophaga hutchinsonii.</title>
        <authorList>
            <person name="Xie G."/>
            <person name="Bruce D.C."/>
            <person name="Challacombe J.F."/>
            <person name="Chertkov O."/>
            <person name="Detter J.C."/>
            <person name="Gilna P."/>
            <person name="Han C.S."/>
            <person name="Lucas S."/>
            <person name="Misra M."/>
            <person name="Myers G.L."/>
            <person name="Richardson P."/>
            <person name="Tapia R."/>
            <person name="Thayer N."/>
            <person name="Thompson L.S."/>
            <person name="Brettin T.S."/>
            <person name="Henrissat B."/>
            <person name="Wilson D.B."/>
            <person name="McBride M.J."/>
        </authorList>
    </citation>
    <scope>NUCLEOTIDE SEQUENCE [LARGE SCALE GENOMIC DNA]</scope>
    <source>
        <strain>ATCC 33406 / DSM 1761 / JCM 20678 / CIP 103989 / IAM 12607 / NBRC 15051 / NCIMB 9469 / D465</strain>
    </source>
</reference>
<name>RSGA_CYTH3</name>